<reference key="1">
    <citation type="submission" date="2005-08" db="EMBL/GenBank/DDBJ databases">
        <title>Complete sequence of chromosome 1 of Synechococcus elongatus PCC 7942.</title>
        <authorList>
            <consortium name="US DOE Joint Genome Institute"/>
            <person name="Copeland A."/>
            <person name="Lucas S."/>
            <person name="Lapidus A."/>
            <person name="Barry K."/>
            <person name="Detter J.C."/>
            <person name="Glavina T."/>
            <person name="Hammon N."/>
            <person name="Israni S."/>
            <person name="Pitluck S."/>
            <person name="Schmutz J."/>
            <person name="Larimer F."/>
            <person name="Land M."/>
            <person name="Kyrpides N."/>
            <person name="Lykidis A."/>
            <person name="Golden S."/>
            <person name="Richardson P."/>
        </authorList>
    </citation>
    <scope>NUCLEOTIDE SEQUENCE [LARGE SCALE GENOMIC DNA]</scope>
    <source>
        <strain>ATCC 33912 / PCC 7942 / FACHB-805</strain>
    </source>
</reference>
<sequence length="238" mass="26054">MAWIRPDGRRPDQLRAIAFQRRFTQFPAGSVLAQFGQTQVLCTVTIQAGVPRWLTGQGQGWLTAEYRMLPGATPDRQSREWLKLSGRTQEIQRLIGRSLRAAIDLKKLGERTLLIDADVLQADAGTRTTAINGSWVALQDAIAQLIAQGELTESPIQRSIAAVSVALIGGEAFLDPDYPEDVQADVDCNVVMGDRGELIEIQGTAEANPFSRTQLNHILDLAEQGIAQIQAAQLEALR</sequence>
<gene>
    <name evidence="1" type="primary">rph</name>
    <name type="ordered locus">Synpcc7942_1073</name>
</gene>
<protein>
    <recommendedName>
        <fullName evidence="1">Ribonuclease PH</fullName>
        <shortName evidence="1">RNase PH</shortName>
        <ecNumber evidence="1">2.7.7.56</ecNumber>
    </recommendedName>
    <alternativeName>
        <fullName evidence="1">tRNA nucleotidyltransferase</fullName>
    </alternativeName>
</protein>
<proteinExistence type="inferred from homology"/>
<organism>
    <name type="scientific">Synechococcus elongatus (strain ATCC 33912 / PCC 7942 / FACHB-805)</name>
    <name type="common">Anacystis nidulans R2</name>
    <dbReference type="NCBI Taxonomy" id="1140"/>
    <lineage>
        <taxon>Bacteria</taxon>
        <taxon>Bacillati</taxon>
        <taxon>Cyanobacteriota</taxon>
        <taxon>Cyanophyceae</taxon>
        <taxon>Synechococcales</taxon>
        <taxon>Synechococcaceae</taxon>
        <taxon>Synechococcus</taxon>
    </lineage>
</organism>
<feature type="chain" id="PRO_1000024901" description="Ribonuclease PH">
    <location>
        <begin position="1"/>
        <end position="238"/>
    </location>
</feature>
<feature type="binding site" evidence="1">
    <location>
        <position position="87"/>
    </location>
    <ligand>
        <name>phosphate</name>
        <dbReference type="ChEBI" id="CHEBI:43474"/>
        <note>substrate</note>
    </ligand>
</feature>
<feature type="binding site" evidence="1">
    <location>
        <begin position="125"/>
        <end position="127"/>
    </location>
    <ligand>
        <name>phosphate</name>
        <dbReference type="ChEBI" id="CHEBI:43474"/>
        <note>substrate</note>
    </ligand>
</feature>
<dbReference type="EC" id="2.7.7.56" evidence="1"/>
<dbReference type="EMBL" id="CP000100">
    <property type="protein sequence ID" value="ABB57103.1"/>
    <property type="molecule type" value="Genomic_DNA"/>
</dbReference>
<dbReference type="RefSeq" id="WP_011242788.1">
    <property type="nucleotide sequence ID" value="NZ_JACJTX010000003.1"/>
</dbReference>
<dbReference type="SMR" id="Q31PB6"/>
<dbReference type="STRING" id="1140.Synpcc7942_1073"/>
<dbReference type="PaxDb" id="1140-Synpcc7942_1073"/>
<dbReference type="GeneID" id="72429926"/>
<dbReference type="KEGG" id="syf:Synpcc7942_1073"/>
<dbReference type="eggNOG" id="COG0689">
    <property type="taxonomic scope" value="Bacteria"/>
</dbReference>
<dbReference type="HOGENOM" id="CLU_050858_0_0_3"/>
<dbReference type="OrthoDB" id="9802265at2"/>
<dbReference type="BioCyc" id="SYNEL:SYNPCC7942_1073-MONOMER"/>
<dbReference type="Proteomes" id="UP000889800">
    <property type="component" value="Chromosome"/>
</dbReference>
<dbReference type="GO" id="GO:0000175">
    <property type="term" value="F:3'-5'-RNA exonuclease activity"/>
    <property type="evidence" value="ECO:0007669"/>
    <property type="project" value="UniProtKB-UniRule"/>
</dbReference>
<dbReference type="GO" id="GO:0000049">
    <property type="term" value="F:tRNA binding"/>
    <property type="evidence" value="ECO:0007669"/>
    <property type="project" value="UniProtKB-UniRule"/>
</dbReference>
<dbReference type="GO" id="GO:0009022">
    <property type="term" value="F:tRNA nucleotidyltransferase activity"/>
    <property type="evidence" value="ECO:0007669"/>
    <property type="project" value="UniProtKB-UniRule"/>
</dbReference>
<dbReference type="GO" id="GO:0016075">
    <property type="term" value="P:rRNA catabolic process"/>
    <property type="evidence" value="ECO:0007669"/>
    <property type="project" value="UniProtKB-UniRule"/>
</dbReference>
<dbReference type="GO" id="GO:0006364">
    <property type="term" value="P:rRNA processing"/>
    <property type="evidence" value="ECO:0007669"/>
    <property type="project" value="UniProtKB-KW"/>
</dbReference>
<dbReference type="GO" id="GO:0008033">
    <property type="term" value="P:tRNA processing"/>
    <property type="evidence" value="ECO:0007669"/>
    <property type="project" value="UniProtKB-UniRule"/>
</dbReference>
<dbReference type="FunFam" id="3.30.230.70:FF:000003">
    <property type="entry name" value="Ribonuclease PH"/>
    <property type="match status" value="1"/>
</dbReference>
<dbReference type="Gene3D" id="3.30.230.70">
    <property type="entry name" value="GHMP Kinase, N-terminal domain"/>
    <property type="match status" value="1"/>
</dbReference>
<dbReference type="HAMAP" id="MF_00564">
    <property type="entry name" value="RNase_PH"/>
    <property type="match status" value="1"/>
</dbReference>
<dbReference type="InterPro" id="IPR001247">
    <property type="entry name" value="ExoRNase_PH_dom1"/>
</dbReference>
<dbReference type="InterPro" id="IPR015847">
    <property type="entry name" value="ExoRNase_PH_dom2"/>
</dbReference>
<dbReference type="InterPro" id="IPR036345">
    <property type="entry name" value="ExoRNase_PH_dom2_sf"/>
</dbReference>
<dbReference type="InterPro" id="IPR027408">
    <property type="entry name" value="PNPase/RNase_PH_dom_sf"/>
</dbReference>
<dbReference type="InterPro" id="IPR020568">
    <property type="entry name" value="Ribosomal_Su5_D2-typ_SF"/>
</dbReference>
<dbReference type="InterPro" id="IPR050080">
    <property type="entry name" value="RNase_PH"/>
</dbReference>
<dbReference type="InterPro" id="IPR002381">
    <property type="entry name" value="RNase_PH_bac-type"/>
</dbReference>
<dbReference type="InterPro" id="IPR018336">
    <property type="entry name" value="RNase_PH_CS"/>
</dbReference>
<dbReference type="NCBIfam" id="TIGR01966">
    <property type="entry name" value="RNasePH"/>
    <property type="match status" value="1"/>
</dbReference>
<dbReference type="PANTHER" id="PTHR11953">
    <property type="entry name" value="EXOSOME COMPLEX COMPONENT"/>
    <property type="match status" value="1"/>
</dbReference>
<dbReference type="PANTHER" id="PTHR11953:SF0">
    <property type="entry name" value="EXOSOME COMPLEX COMPONENT RRP41"/>
    <property type="match status" value="1"/>
</dbReference>
<dbReference type="Pfam" id="PF01138">
    <property type="entry name" value="RNase_PH"/>
    <property type="match status" value="1"/>
</dbReference>
<dbReference type="Pfam" id="PF03725">
    <property type="entry name" value="RNase_PH_C"/>
    <property type="match status" value="1"/>
</dbReference>
<dbReference type="SUPFAM" id="SSF55666">
    <property type="entry name" value="Ribonuclease PH domain 2-like"/>
    <property type="match status" value="1"/>
</dbReference>
<dbReference type="SUPFAM" id="SSF54211">
    <property type="entry name" value="Ribosomal protein S5 domain 2-like"/>
    <property type="match status" value="1"/>
</dbReference>
<dbReference type="PROSITE" id="PS01277">
    <property type="entry name" value="RIBONUCLEASE_PH"/>
    <property type="match status" value="1"/>
</dbReference>
<keyword id="KW-0548">Nucleotidyltransferase</keyword>
<keyword id="KW-1185">Reference proteome</keyword>
<keyword id="KW-0694">RNA-binding</keyword>
<keyword id="KW-0698">rRNA processing</keyword>
<keyword id="KW-0808">Transferase</keyword>
<keyword id="KW-0819">tRNA processing</keyword>
<keyword id="KW-0820">tRNA-binding</keyword>
<accession>Q31PB6</accession>
<name>RNPH_SYNE7</name>
<evidence type="ECO:0000255" key="1">
    <source>
        <dbReference type="HAMAP-Rule" id="MF_00564"/>
    </source>
</evidence>
<comment type="function">
    <text evidence="1">Phosphorolytic 3'-5' exoribonuclease that plays an important role in tRNA 3'-end maturation. Removes nucleotide residues following the 3'-CCA terminus of tRNAs; can also add nucleotides to the ends of RNA molecules by using nucleoside diphosphates as substrates, but this may not be physiologically important. Probably plays a role in initiation of 16S rRNA degradation (leading to ribosome degradation) during starvation.</text>
</comment>
<comment type="catalytic activity">
    <reaction evidence="1">
        <text>tRNA(n+1) + phosphate = tRNA(n) + a ribonucleoside 5'-diphosphate</text>
        <dbReference type="Rhea" id="RHEA:10628"/>
        <dbReference type="Rhea" id="RHEA-COMP:17343"/>
        <dbReference type="Rhea" id="RHEA-COMP:17344"/>
        <dbReference type="ChEBI" id="CHEBI:43474"/>
        <dbReference type="ChEBI" id="CHEBI:57930"/>
        <dbReference type="ChEBI" id="CHEBI:173114"/>
        <dbReference type="EC" id="2.7.7.56"/>
    </reaction>
</comment>
<comment type="subunit">
    <text evidence="1">Homohexameric ring arranged as a trimer of dimers.</text>
</comment>
<comment type="similarity">
    <text evidence="1">Belongs to the RNase PH family.</text>
</comment>